<reference key="1">
    <citation type="submission" date="2008-01" db="EMBL/GenBank/DDBJ databases">
        <title>Complete sequence of Pseudomonas putida GB-1.</title>
        <authorList>
            <consortium name="US DOE Joint Genome Institute"/>
            <person name="Copeland A."/>
            <person name="Lucas S."/>
            <person name="Lapidus A."/>
            <person name="Barry K."/>
            <person name="Glavina del Rio T."/>
            <person name="Dalin E."/>
            <person name="Tice H."/>
            <person name="Pitluck S."/>
            <person name="Bruce D."/>
            <person name="Goodwin L."/>
            <person name="Chertkov O."/>
            <person name="Brettin T."/>
            <person name="Detter J.C."/>
            <person name="Han C."/>
            <person name="Kuske C.R."/>
            <person name="Schmutz J."/>
            <person name="Larimer F."/>
            <person name="Land M."/>
            <person name="Hauser L."/>
            <person name="Kyrpides N."/>
            <person name="Kim E."/>
            <person name="McCarthy J.K."/>
            <person name="Richardson P."/>
        </authorList>
    </citation>
    <scope>NUCLEOTIDE SEQUENCE [LARGE SCALE GENOMIC DNA]</scope>
    <source>
        <strain>GB-1</strain>
    </source>
</reference>
<accession>B0KN02</accession>
<organism>
    <name type="scientific">Pseudomonas putida (strain GB-1)</name>
    <dbReference type="NCBI Taxonomy" id="76869"/>
    <lineage>
        <taxon>Bacteria</taxon>
        <taxon>Pseudomonadati</taxon>
        <taxon>Pseudomonadota</taxon>
        <taxon>Gammaproteobacteria</taxon>
        <taxon>Pseudomonadales</taxon>
        <taxon>Pseudomonadaceae</taxon>
        <taxon>Pseudomonas</taxon>
    </lineage>
</organism>
<sequence length="259" mass="28628">MIQIDALPAFSDNYIWLLQDTAKRRCAVVDPGDAAPVERWLAANPEWVLSDILVTHHHNDHVGGVERLKQLSGARVCGPANERIPGRDLALDEGDKVDVLGVTFQVLAVPGHTLGHIAFFSDGPPTPVLFSGDTLFAAGCGRMFEGTPEQMQPALARLAALPEQTEVYCAHEYTLSNLRFAKAVEPTNTHVQQRFEDVTRLRAENRISLPSTIGLERLTNPFLRTSETLVKQKADEWKGHSNTSHVAVFAALRSWKDTF</sequence>
<feature type="chain" id="PRO_1000144786" description="Hydroxyacylglutathione hydrolase">
    <location>
        <begin position="1"/>
        <end position="259"/>
    </location>
</feature>
<feature type="binding site" evidence="1">
    <location>
        <position position="56"/>
    </location>
    <ligand>
        <name>Zn(2+)</name>
        <dbReference type="ChEBI" id="CHEBI:29105"/>
        <label>1</label>
    </ligand>
</feature>
<feature type="binding site" evidence="1">
    <location>
        <position position="58"/>
    </location>
    <ligand>
        <name>Zn(2+)</name>
        <dbReference type="ChEBI" id="CHEBI:29105"/>
        <label>1</label>
    </ligand>
</feature>
<feature type="binding site" evidence="1">
    <location>
        <position position="60"/>
    </location>
    <ligand>
        <name>Zn(2+)</name>
        <dbReference type="ChEBI" id="CHEBI:29105"/>
        <label>2</label>
    </ligand>
</feature>
<feature type="binding site" evidence="1">
    <location>
        <position position="61"/>
    </location>
    <ligand>
        <name>Zn(2+)</name>
        <dbReference type="ChEBI" id="CHEBI:29105"/>
        <label>2</label>
    </ligand>
</feature>
<feature type="binding site" evidence="1">
    <location>
        <position position="112"/>
    </location>
    <ligand>
        <name>Zn(2+)</name>
        <dbReference type="ChEBI" id="CHEBI:29105"/>
        <label>1</label>
    </ligand>
</feature>
<feature type="binding site" evidence="1">
    <location>
        <position position="133"/>
    </location>
    <ligand>
        <name>Zn(2+)</name>
        <dbReference type="ChEBI" id="CHEBI:29105"/>
        <label>1</label>
    </ligand>
</feature>
<feature type="binding site" evidence="1">
    <location>
        <position position="133"/>
    </location>
    <ligand>
        <name>Zn(2+)</name>
        <dbReference type="ChEBI" id="CHEBI:29105"/>
        <label>2</label>
    </ligand>
</feature>
<feature type="binding site" evidence="1">
    <location>
        <position position="171"/>
    </location>
    <ligand>
        <name>Zn(2+)</name>
        <dbReference type="ChEBI" id="CHEBI:29105"/>
        <label>2</label>
    </ligand>
</feature>
<proteinExistence type="inferred from homology"/>
<comment type="function">
    <text evidence="1">Thiolesterase that catalyzes the hydrolysis of S-D-lactoyl-glutathione to form glutathione and D-lactic acid.</text>
</comment>
<comment type="catalytic activity">
    <reaction evidence="1">
        <text>an S-(2-hydroxyacyl)glutathione + H2O = a 2-hydroxy carboxylate + glutathione + H(+)</text>
        <dbReference type="Rhea" id="RHEA:21864"/>
        <dbReference type="ChEBI" id="CHEBI:15377"/>
        <dbReference type="ChEBI" id="CHEBI:15378"/>
        <dbReference type="ChEBI" id="CHEBI:57925"/>
        <dbReference type="ChEBI" id="CHEBI:58896"/>
        <dbReference type="ChEBI" id="CHEBI:71261"/>
        <dbReference type="EC" id="3.1.2.6"/>
    </reaction>
</comment>
<comment type="cofactor">
    <cofactor evidence="1">
        <name>Zn(2+)</name>
        <dbReference type="ChEBI" id="CHEBI:29105"/>
    </cofactor>
    <text evidence="1">Binds 2 Zn(2+) ions per subunit.</text>
</comment>
<comment type="pathway">
    <text evidence="1">Secondary metabolite metabolism; methylglyoxal degradation; (R)-lactate from methylglyoxal: step 2/2.</text>
</comment>
<comment type="subunit">
    <text evidence="1">Monomer.</text>
</comment>
<comment type="similarity">
    <text evidence="1">Belongs to the metallo-beta-lactamase superfamily. Glyoxalase II family.</text>
</comment>
<protein>
    <recommendedName>
        <fullName evidence="1">Hydroxyacylglutathione hydrolase</fullName>
        <ecNumber evidence="1">3.1.2.6</ecNumber>
    </recommendedName>
    <alternativeName>
        <fullName evidence="1">Glyoxalase II</fullName>
        <shortName evidence="1">Glx II</shortName>
    </alternativeName>
</protein>
<keyword id="KW-0378">Hydrolase</keyword>
<keyword id="KW-0479">Metal-binding</keyword>
<keyword id="KW-0862">Zinc</keyword>
<evidence type="ECO:0000255" key="1">
    <source>
        <dbReference type="HAMAP-Rule" id="MF_01374"/>
    </source>
</evidence>
<dbReference type="EC" id="3.1.2.6" evidence="1"/>
<dbReference type="EMBL" id="CP000926">
    <property type="protein sequence ID" value="ABY99606.1"/>
    <property type="molecule type" value="Genomic_DNA"/>
</dbReference>
<dbReference type="RefSeq" id="WP_012273311.1">
    <property type="nucleotide sequence ID" value="NC_010322.1"/>
</dbReference>
<dbReference type="SMR" id="B0KN02"/>
<dbReference type="KEGG" id="ppg:PputGB1_3716"/>
<dbReference type="eggNOG" id="COG0491">
    <property type="taxonomic scope" value="Bacteria"/>
</dbReference>
<dbReference type="HOGENOM" id="CLU_030571_4_1_6"/>
<dbReference type="UniPathway" id="UPA00619">
    <property type="reaction ID" value="UER00676"/>
</dbReference>
<dbReference type="Proteomes" id="UP000002157">
    <property type="component" value="Chromosome"/>
</dbReference>
<dbReference type="GO" id="GO:0004416">
    <property type="term" value="F:hydroxyacylglutathione hydrolase activity"/>
    <property type="evidence" value="ECO:0007669"/>
    <property type="project" value="UniProtKB-UniRule"/>
</dbReference>
<dbReference type="GO" id="GO:0046872">
    <property type="term" value="F:metal ion binding"/>
    <property type="evidence" value="ECO:0007669"/>
    <property type="project" value="UniProtKB-KW"/>
</dbReference>
<dbReference type="GO" id="GO:0019243">
    <property type="term" value="P:methylglyoxal catabolic process to D-lactate via S-lactoyl-glutathione"/>
    <property type="evidence" value="ECO:0007669"/>
    <property type="project" value="InterPro"/>
</dbReference>
<dbReference type="CDD" id="cd07723">
    <property type="entry name" value="hydroxyacylglutathione_hydrolase_MBL-fold"/>
    <property type="match status" value="1"/>
</dbReference>
<dbReference type="Gene3D" id="3.60.15.10">
    <property type="entry name" value="Ribonuclease Z/Hydroxyacylglutathione hydrolase-like"/>
    <property type="match status" value="1"/>
</dbReference>
<dbReference type="HAMAP" id="MF_01374">
    <property type="entry name" value="Glyoxalase_2"/>
    <property type="match status" value="1"/>
</dbReference>
<dbReference type="InterPro" id="IPR035680">
    <property type="entry name" value="Clx_II_MBL"/>
</dbReference>
<dbReference type="InterPro" id="IPR050110">
    <property type="entry name" value="Glyoxalase_II_hydrolase"/>
</dbReference>
<dbReference type="InterPro" id="IPR032282">
    <property type="entry name" value="HAGH_C"/>
</dbReference>
<dbReference type="InterPro" id="IPR017782">
    <property type="entry name" value="Hydroxyacylglutathione_Hdrlase"/>
</dbReference>
<dbReference type="InterPro" id="IPR001279">
    <property type="entry name" value="Metallo-B-lactamas"/>
</dbReference>
<dbReference type="InterPro" id="IPR036866">
    <property type="entry name" value="RibonucZ/Hydroxyglut_hydro"/>
</dbReference>
<dbReference type="NCBIfam" id="TIGR03413">
    <property type="entry name" value="GSH_gloB"/>
    <property type="match status" value="1"/>
</dbReference>
<dbReference type="PANTHER" id="PTHR43705">
    <property type="entry name" value="HYDROXYACYLGLUTATHIONE HYDROLASE"/>
    <property type="match status" value="1"/>
</dbReference>
<dbReference type="PANTHER" id="PTHR43705:SF1">
    <property type="entry name" value="HYDROXYACYLGLUTATHIONE HYDROLASE GLOB"/>
    <property type="match status" value="1"/>
</dbReference>
<dbReference type="Pfam" id="PF16123">
    <property type="entry name" value="HAGH_C"/>
    <property type="match status" value="1"/>
</dbReference>
<dbReference type="Pfam" id="PF00753">
    <property type="entry name" value="Lactamase_B"/>
    <property type="match status" value="1"/>
</dbReference>
<dbReference type="PIRSF" id="PIRSF005457">
    <property type="entry name" value="Glx"/>
    <property type="match status" value="1"/>
</dbReference>
<dbReference type="SMART" id="SM00849">
    <property type="entry name" value="Lactamase_B"/>
    <property type="match status" value="1"/>
</dbReference>
<dbReference type="SUPFAM" id="SSF56281">
    <property type="entry name" value="Metallo-hydrolase/oxidoreductase"/>
    <property type="match status" value="1"/>
</dbReference>
<gene>
    <name evidence="1" type="primary">gloB</name>
    <name type="ordered locus">PputGB1_3716</name>
</gene>
<name>GLO2_PSEPG</name>